<gene>
    <name type="primary">IML2</name>
    <name type="ORF">PICST_68670</name>
</gene>
<dbReference type="EMBL" id="AAVQ01000001">
    <property type="protein sequence ID" value="EAZ63587.2"/>
    <property type="molecule type" value="Genomic_DNA"/>
</dbReference>
<dbReference type="RefSeq" id="XP_001387610.2">
    <property type="nucleotide sequence ID" value="XM_001387573.1"/>
</dbReference>
<dbReference type="SMR" id="A3GGT0"/>
<dbReference type="FunCoup" id="A3GGT0">
    <property type="interactions" value="136"/>
</dbReference>
<dbReference type="GeneID" id="4851479"/>
<dbReference type="KEGG" id="pic:PICST_68670"/>
<dbReference type="eggNOG" id="KOG3783">
    <property type="taxonomic scope" value="Eukaryota"/>
</dbReference>
<dbReference type="HOGENOM" id="CLU_014926_0_0_1"/>
<dbReference type="InParanoid" id="A3GGT0"/>
<dbReference type="OMA" id="WNGYNRM"/>
<dbReference type="OrthoDB" id="2154985at2759"/>
<dbReference type="Proteomes" id="UP000002258">
    <property type="component" value="Chromosome 1"/>
</dbReference>
<dbReference type="GO" id="GO:0005829">
    <property type="term" value="C:cytosol"/>
    <property type="evidence" value="ECO:0007669"/>
    <property type="project" value="TreeGrafter"/>
</dbReference>
<dbReference type="GO" id="GO:0005741">
    <property type="term" value="C:mitochondrial outer membrane"/>
    <property type="evidence" value="ECO:0007669"/>
    <property type="project" value="TreeGrafter"/>
</dbReference>
<dbReference type="GO" id="GO:0005634">
    <property type="term" value="C:nucleus"/>
    <property type="evidence" value="ECO:0007669"/>
    <property type="project" value="UniProtKB-SubCell"/>
</dbReference>
<dbReference type="Gene3D" id="1.25.40.10">
    <property type="entry name" value="Tetratricopeptide repeat domain"/>
    <property type="match status" value="1"/>
</dbReference>
<dbReference type="InterPro" id="IPR019412">
    <property type="entry name" value="Iml2/TPR_39"/>
</dbReference>
<dbReference type="InterPro" id="IPR011990">
    <property type="entry name" value="TPR-like_helical_dom_sf"/>
</dbReference>
<dbReference type="PANTHER" id="PTHR31859">
    <property type="entry name" value="TETRATRICOPEPTIDE REPEAT PROTEIN 39 FAMILY MEMBER"/>
    <property type="match status" value="1"/>
</dbReference>
<dbReference type="PANTHER" id="PTHR31859:SF1">
    <property type="entry name" value="TETRATRICOPEPTIDE REPEAT PROTEIN 39C"/>
    <property type="match status" value="1"/>
</dbReference>
<dbReference type="Pfam" id="PF10300">
    <property type="entry name" value="Iml2-TPR_39"/>
    <property type="match status" value="1"/>
</dbReference>
<dbReference type="SUPFAM" id="SSF48452">
    <property type="entry name" value="TPR-like"/>
    <property type="match status" value="1"/>
</dbReference>
<proteinExistence type="inferred from homology"/>
<sequence length="789" mass="88956">MLKGLRKKASILSISSTQSDTPANNYDKVLKQVRDFEIALQAMDFLLDDRTDEGTKLLQKEAQLHSQSGSDQPAGIFPLALGVMEFIEATLGFETEVMERANRTLSEAETASLNNSKYNVKYSLATSYIYPPGTEFQVTYAESTLLNALVMLLKENNGMVEGAKALFKLRRAYQTLDSVYKKIKDSEPIFNKNLSKLKKESLSNMNNISTSDLPGYKSNSSMSSNGGSSASLASDVKLMKDLEKVYQMRKGRIEGTNLGNNAPEKINFFEGFEDRSSNSSIVSSAATSTSNLSTTESATDNQLHVSTVDEFIHSGVQLCFGILQVVLSLIPPAIGKVLSIVGFKGDREIGLKMLWRTAITSRNIHGELALLCLLVFYDGPVQFVDVGFQLPGHEDSKVKDVLSLDGKTTVSESELKKILQNPALYTPQLLKRARAFFPHNALWLLQEGRVLAAQGELEKATQLMQSFTDDKSNKIRMQQVEALLVFDRGMFYAFQHDYDNAARDFVKLIDINSWSKGVYLFMAASCYLEKYRMIEMGLVDVEDKEKELRKYEDLAVKYFELAPTYVPNHGHNSTSKKQLPFDKFLLRKLRHLEERKRQYPKLKFVDLIGTSLIHELVYFWNGYNRMSEKDLQLSLKLLAYSGEVNAELSANSETASYTKIAESEDEAMIRYFLQAIVLRSTGKVSEGLSILENHVISKYVVADLPQFKFNKMTYSPYLYPTALYEKTMFIWILRTTHVEKLDVRKAVQESKNCLKKAEIVGEGDYELSNRTGMRMKAAGDRLDQLGHGH</sequence>
<keyword id="KW-0963">Cytoplasm</keyword>
<keyword id="KW-0539">Nucleus</keyword>
<keyword id="KW-0597">Phosphoprotein</keyword>
<keyword id="KW-1185">Reference proteome</keyword>
<protein>
    <recommendedName>
        <fullName>Inclusion body clearance protein IML2</fullName>
    </recommendedName>
</protein>
<comment type="function">
    <text evidence="1">Inclusion body (IB) resident protein that interacts strongly with lipid droplet (LD) proteins. Involved in LD-mediated IB clearing after protein folding stress, probably by enabling access to the IBs of an LD-stored soluble sterol derivative that acts as a chaperone in inclusion clearing.</text>
</comment>
<comment type="subunit">
    <text evidence="1">Interacts with lipid droplet proteins.</text>
</comment>
<comment type="subcellular location">
    <subcellularLocation>
        <location evidence="1">Cytoplasm</location>
    </subcellularLocation>
    <subcellularLocation>
        <location evidence="1">Nucleus</location>
    </subcellularLocation>
    <text evidence="1">Localized exclusively in cytoplasmic inclusion bodies under protein folding stress conditions.</text>
</comment>
<comment type="similarity">
    <text evidence="3">Belongs to the IML2 family.</text>
</comment>
<organism>
    <name type="scientific">Scheffersomyces stipitis (strain ATCC 58785 / CBS 6054 / NBRC 10063 / NRRL Y-11545)</name>
    <name type="common">Yeast</name>
    <name type="synonym">Pichia stipitis</name>
    <dbReference type="NCBI Taxonomy" id="322104"/>
    <lineage>
        <taxon>Eukaryota</taxon>
        <taxon>Fungi</taxon>
        <taxon>Dikarya</taxon>
        <taxon>Ascomycota</taxon>
        <taxon>Saccharomycotina</taxon>
        <taxon>Pichiomycetes</taxon>
        <taxon>Debaryomycetaceae</taxon>
        <taxon>Scheffersomyces</taxon>
    </lineage>
</organism>
<name>IML2_PICST</name>
<evidence type="ECO:0000250" key="1">
    <source>
        <dbReference type="UniProtKB" id="P47031"/>
    </source>
</evidence>
<evidence type="ECO:0000256" key="2">
    <source>
        <dbReference type="SAM" id="MobiDB-lite"/>
    </source>
</evidence>
<evidence type="ECO:0000305" key="3"/>
<feature type="chain" id="PRO_0000333355" description="Inclusion body clearance protein IML2">
    <location>
        <begin position="1"/>
        <end position="789"/>
    </location>
</feature>
<feature type="region of interest" description="Disordered" evidence="2">
    <location>
        <begin position="209"/>
        <end position="231"/>
    </location>
</feature>
<feature type="compositionally biased region" description="Low complexity" evidence="2">
    <location>
        <begin position="218"/>
        <end position="231"/>
    </location>
</feature>
<accession>A3GGT0</accession>
<reference key="1">
    <citation type="journal article" date="2007" name="Nat. Biotechnol.">
        <title>Genome sequence of the lignocellulose-bioconverting and xylose-fermenting yeast Pichia stipitis.</title>
        <authorList>
            <person name="Jeffries T.W."/>
            <person name="Grigoriev I.V."/>
            <person name="Grimwood J."/>
            <person name="Laplaza J.M."/>
            <person name="Aerts A."/>
            <person name="Salamov A."/>
            <person name="Schmutz J."/>
            <person name="Lindquist E."/>
            <person name="Dehal P."/>
            <person name="Shapiro H."/>
            <person name="Jin Y.-S."/>
            <person name="Passoth V."/>
            <person name="Richardson P.M."/>
        </authorList>
    </citation>
    <scope>NUCLEOTIDE SEQUENCE [LARGE SCALE GENOMIC DNA]</scope>
    <source>
        <strain>ATCC 58785 / CBS 6054 / NBRC 10063 / NRRL Y-11545</strain>
    </source>
</reference>